<accession>Q6CZW6</accession>
<protein>
    <recommendedName>
        <fullName evidence="2">Elongation factor Tu</fullName>
        <shortName evidence="2">EF-Tu</shortName>
        <ecNumber evidence="2">3.6.5.3</ecNumber>
    </recommendedName>
</protein>
<sequence>MSKEKFERTKPHVNVGTIGHVDHGKTTLTAAITTVLAKTYGGSARAFDQIDNAPEEKARGITINTSHVEYDTPARHYAHVDCPGHADYVKNMITGAAQMDGAILVVAATDGPMPQTREHILLGRQVGVPFMIVFMNKCDMVDDEELLELVEMEVRELLSQYDFPGDDIPVIRGSALKALEGEAEWEAKIIELAGYLDSYIPEPERAIDKPFLLPIEDVFSISGRGTVVTGRVERGIVKVGEEVEIVGIKDTVKSTCTGVEMFRKLLDEGRAGENVGVLLRGIKREEIERGQVLAKPGSIKPHTQFESEVYILSKDEGGRHTPFFKGYRPQFYFRTTDVTGTIELPEGVEMVMPGDNIKMVVTLIHPIAMDDGLRFAIREGGRTVGAGVVAKVIA</sequence>
<proteinExistence type="inferred from homology"/>
<comment type="function">
    <text evidence="2">GTP hydrolase that promotes the GTP-dependent binding of aminoacyl-tRNA to the A-site of ribosomes during protein biosynthesis.</text>
</comment>
<comment type="catalytic activity">
    <reaction evidence="2">
        <text>GTP + H2O = GDP + phosphate + H(+)</text>
        <dbReference type="Rhea" id="RHEA:19669"/>
        <dbReference type="ChEBI" id="CHEBI:15377"/>
        <dbReference type="ChEBI" id="CHEBI:15378"/>
        <dbReference type="ChEBI" id="CHEBI:37565"/>
        <dbReference type="ChEBI" id="CHEBI:43474"/>
        <dbReference type="ChEBI" id="CHEBI:58189"/>
        <dbReference type="EC" id="3.6.5.3"/>
    </reaction>
    <physiologicalReaction direction="left-to-right" evidence="2">
        <dbReference type="Rhea" id="RHEA:19670"/>
    </physiologicalReaction>
</comment>
<comment type="subunit">
    <text evidence="2">Monomer.</text>
</comment>
<comment type="subcellular location">
    <subcellularLocation>
        <location evidence="2">Cytoplasm</location>
    </subcellularLocation>
</comment>
<comment type="similarity">
    <text evidence="2">Belongs to the TRAFAC class translation factor GTPase superfamily. Classic translation factor GTPase family. EF-Tu/EF-1A subfamily.</text>
</comment>
<dbReference type="EC" id="3.6.5.3" evidence="2"/>
<dbReference type="EMBL" id="BX950851">
    <property type="protein sequence ID" value="CAG73135.1"/>
    <property type="molecule type" value="Genomic_DNA"/>
</dbReference>
<dbReference type="EMBL" id="BX950851">
    <property type="protein sequence ID" value="CAG76932.1"/>
    <property type="molecule type" value="Genomic_DNA"/>
</dbReference>
<dbReference type="SMR" id="Q6CZW6"/>
<dbReference type="STRING" id="218491.ECA0216"/>
<dbReference type="KEGG" id="eca:ECA0216"/>
<dbReference type="KEGG" id="eca:ECA4035"/>
<dbReference type="eggNOG" id="COG0050">
    <property type="taxonomic scope" value="Bacteria"/>
</dbReference>
<dbReference type="HOGENOM" id="CLU_007265_0_2_6"/>
<dbReference type="OrthoDB" id="9803139at2"/>
<dbReference type="Proteomes" id="UP000007966">
    <property type="component" value="Chromosome"/>
</dbReference>
<dbReference type="GO" id="GO:0005829">
    <property type="term" value="C:cytosol"/>
    <property type="evidence" value="ECO:0007669"/>
    <property type="project" value="TreeGrafter"/>
</dbReference>
<dbReference type="GO" id="GO:0005525">
    <property type="term" value="F:GTP binding"/>
    <property type="evidence" value="ECO:0007669"/>
    <property type="project" value="UniProtKB-UniRule"/>
</dbReference>
<dbReference type="GO" id="GO:0003924">
    <property type="term" value="F:GTPase activity"/>
    <property type="evidence" value="ECO:0007669"/>
    <property type="project" value="InterPro"/>
</dbReference>
<dbReference type="GO" id="GO:0097216">
    <property type="term" value="F:guanosine tetraphosphate binding"/>
    <property type="evidence" value="ECO:0007669"/>
    <property type="project" value="UniProtKB-ARBA"/>
</dbReference>
<dbReference type="GO" id="GO:0003746">
    <property type="term" value="F:translation elongation factor activity"/>
    <property type="evidence" value="ECO:0007669"/>
    <property type="project" value="UniProtKB-UniRule"/>
</dbReference>
<dbReference type="CDD" id="cd01884">
    <property type="entry name" value="EF_Tu"/>
    <property type="match status" value="1"/>
</dbReference>
<dbReference type="CDD" id="cd03697">
    <property type="entry name" value="EFTU_II"/>
    <property type="match status" value="1"/>
</dbReference>
<dbReference type="CDD" id="cd03707">
    <property type="entry name" value="EFTU_III"/>
    <property type="match status" value="1"/>
</dbReference>
<dbReference type="FunFam" id="2.40.30.10:FF:000001">
    <property type="entry name" value="Elongation factor Tu"/>
    <property type="match status" value="1"/>
</dbReference>
<dbReference type="FunFam" id="3.40.50.300:FF:000003">
    <property type="entry name" value="Elongation factor Tu"/>
    <property type="match status" value="1"/>
</dbReference>
<dbReference type="Gene3D" id="3.40.50.300">
    <property type="entry name" value="P-loop containing nucleotide triphosphate hydrolases"/>
    <property type="match status" value="1"/>
</dbReference>
<dbReference type="Gene3D" id="2.40.30.10">
    <property type="entry name" value="Translation factors"/>
    <property type="match status" value="2"/>
</dbReference>
<dbReference type="HAMAP" id="MF_00118_B">
    <property type="entry name" value="EF_Tu_B"/>
    <property type="match status" value="1"/>
</dbReference>
<dbReference type="InterPro" id="IPR041709">
    <property type="entry name" value="EF-Tu_GTP-bd"/>
</dbReference>
<dbReference type="InterPro" id="IPR050055">
    <property type="entry name" value="EF-Tu_GTPase"/>
</dbReference>
<dbReference type="InterPro" id="IPR004161">
    <property type="entry name" value="EFTu-like_2"/>
</dbReference>
<dbReference type="InterPro" id="IPR033720">
    <property type="entry name" value="EFTU_2"/>
</dbReference>
<dbReference type="InterPro" id="IPR031157">
    <property type="entry name" value="G_TR_CS"/>
</dbReference>
<dbReference type="InterPro" id="IPR027417">
    <property type="entry name" value="P-loop_NTPase"/>
</dbReference>
<dbReference type="InterPro" id="IPR005225">
    <property type="entry name" value="Small_GTP-bd"/>
</dbReference>
<dbReference type="InterPro" id="IPR000795">
    <property type="entry name" value="T_Tr_GTP-bd_dom"/>
</dbReference>
<dbReference type="InterPro" id="IPR009000">
    <property type="entry name" value="Transl_B-barrel_sf"/>
</dbReference>
<dbReference type="InterPro" id="IPR009001">
    <property type="entry name" value="Transl_elong_EF1A/Init_IF2_C"/>
</dbReference>
<dbReference type="InterPro" id="IPR004541">
    <property type="entry name" value="Transl_elong_EFTu/EF1A_bac/org"/>
</dbReference>
<dbReference type="InterPro" id="IPR004160">
    <property type="entry name" value="Transl_elong_EFTu/EF1A_C"/>
</dbReference>
<dbReference type="NCBIfam" id="TIGR00485">
    <property type="entry name" value="EF-Tu"/>
    <property type="match status" value="1"/>
</dbReference>
<dbReference type="NCBIfam" id="NF000766">
    <property type="entry name" value="PRK00049.1"/>
    <property type="match status" value="1"/>
</dbReference>
<dbReference type="NCBIfam" id="NF009372">
    <property type="entry name" value="PRK12735.1"/>
    <property type="match status" value="1"/>
</dbReference>
<dbReference type="NCBIfam" id="NF009373">
    <property type="entry name" value="PRK12736.1"/>
    <property type="match status" value="1"/>
</dbReference>
<dbReference type="NCBIfam" id="TIGR00231">
    <property type="entry name" value="small_GTP"/>
    <property type="match status" value="1"/>
</dbReference>
<dbReference type="PANTHER" id="PTHR43721:SF22">
    <property type="entry name" value="ELONGATION FACTOR TU, MITOCHONDRIAL"/>
    <property type="match status" value="1"/>
</dbReference>
<dbReference type="PANTHER" id="PTHR43721">
    <property type="entry name" value="ELONGATION FACTOR TU-RELATED"/>
    <property type="match status" value="1"/>
</dbReference>
<dbReference type="Pfam" id="PF00009">
    <property type="entry name" value="GTP_EFTU"/>
    <property type="match status" value="1"/>
</dbReference>
<dbReference type="Pfam" id="PF03144">
    <property type="entry name" value="GTP_EFTU_D2"/>
    <property type="match status" value="1"/>
</dbReference>
<dbReference type="Pfam" id="PF03143">
    <property type="entry name" value="GTP_EFTU_D3"/>
    <property type="match status" value="1"/>
</dbReference>
<dbReference type="PRINTS" id="PR00315">
    <property type="entry name" value="ELONGATNFCT"/>
</dbReference>
<dbReference type="SUPFAM" id="SSF50465">
    <property type="entry name" value="EF-Tu/eEF-1alpha/eIF2-gamma C-terminal domain"/>
    <property type="match status" value="1"/>
</dbReference>
<dbReference type="SUPFAM" id="SSF52540">
    <property type="entry name" value="P-loop containing nucleoside triphosphate hydrolases"/>
    <property type="match status" value="1"/>
</dbReference>
<dbReference type="SUPFAM" id="SSF50447">
    <property type="entry name" value="Translation proteins"/>
    <property type="match status" value="1"/>
</dbReference>
<dbReference type="PROSITE" id="PS00301">
    <property type="entry name" value="G_TR_1"/>
    <property type="match status" value="1"/>
</dbReference>
<dbReference type="PROSITE" id="PS51722">
    <property type="entry name" value="G_TR_2"/>
    <property type="match status" value="1"/>
</dbReference>
<evidence type="ECO:0000250" key="1"/>
<evidence type="ECO:0000255" key="2">
    <source>
        <dbReference type="HAMAP-Rule" id="MF_00118"/>
    </source>
</evidence>
<reference key="1">
    <citation type="journal article" date="2004" name="Proc. Natl. Acad. Sci. U.S.A.">
        <title>Genome sequence of the enterobacterial phytopathogen Erwinia carotovora subsp. atroseptica and characterization of virulence factors.</title>
        <authorList>
            <person name="Bell K.S."/>
            <person name="Sebaihia M."/>
            <person name="Pritchard L."/>
            <person name="Holden M.T.G."/>
            <person name="Hyman L.J."/>
            <person name="Holeva M.C."/>
            <person name="Thomson N.R."/>
            <person name="Bentley S.D."/>
            <person name="Churcher L.J.C."/>
            <person name="Mungall K."/>
            <person name="Atkin R."/>
            <person name="Bason N."/>
            <person name="Brooks K."/>
            <person name="Chillingworth T."/>
            <person name="Clark K."/>
            <person name="Doggett J."/>
            <person name="Fraser A."/>
            <person name="Hance Z."/>
            <person name="Hauser H."/>
            <person name="Jagels K."/>
            <person name="Moule S."/>
            <person name="Norbertczak H."/>
            <person name="Ormond D."/>
            <person name="Price C."/>
            <person name="Quail M.A."/>
            <person name="Sanders M."/>
            <person name="Walker D."/>
            <person name="Whitehead S."/>
            <person name="Salmond G.P.C."/>
            <person name="Birch P.R.J."/>
            <person name="Parkhill J."/>
            <person name="Toth I.K."/>
        </authorList>
    </citation>
    <scope>NUCLEOTIDE SEQUENCE [LARGE SCALE GENOMIC DNA]</scope>
    <source>
        <strain>SCRI 1043 / ATCC BAA-672</strain>
    </source>
</reference>
<keyword id="KW-0963">Cytoplasm</keyword>
<keyword id="KW-0251">Elongation factor</keyword>
<keyword id="KW-0342">GTP-binding</keyword>
<keyword id="KW-0378">Hydrolase</keyword>
<keyword id="KW-0460">Magnesium</keyword>
<keyword id="KW-0479">Metal-binding</keyword>
<keyword id="KW-0547">Nucleotide-binding</keyword>
<keyword id="KW-0648">Protein biosynthesis</keyword>
<keyword id="KW-1185">Reference proteome</keyword>
<gene>
    <name evidence="2" type="primary">tuf1</name>
    <name type="synonym">tufA</name>
    <name type="ordered locus">ECA0216</name>
</gene>
<gene>
    <name evidence="2" type="primary">tuf2</name>
    <name type="synonym">tufB</name>
    <name type="ordered locus">ECA4035</name>
</gene>
<name>EFTU_PECAS</name>
<organism>
    <name type="scientific">Pectobacterium atrosepticum (strain SCRI 1043 / ATCC BAA-672)</name>
    <name type="common">Erwinia carotovora subsp. atroseptica</name>
    <dbReference type="NCBI Taxonomy" id="218491"/>
    <lineage>
        <taxon>Bacteria</taxon>
        <taxon>Pseudomonadati</taxon>
        <taxon>Pseudomonadota</taxon>
        <taxon>Gammaproteobacteria</taxon>
        <taxon>Enterobacterales</taxon>
        <taxon>Pectobacteriaceae</taxon>
        <taxon>Pectobacterium</taxon>
    </lineage>
</organism>
<feature type="chain" id="PRO_0000337381" description="Elongation factor Tu">
    <location>
        <begin position="1"/>
        <end position="394"/>
    </location>
</feature>
<feature type="domain" description="tr-type G">
    <location>
        <begin position="10"/>
        <end position="204"/>
    </location>
</feature>
<feature type="region of interest" description="G1" evidence="1">
    <location>
        <begin position="19"/>
        <end position="26"/>
    </location>
</feature>
<feature type="region of interest" description="G2" evidence="1">
    <location>
        <begin position="60"/>
        <end position="64"/>
    </location>
</feature>
<feature type="region of interest" description="G3" evidence="1">
    <location>
        <begin position="81"/>
        <end position="84"/>
    </location>
</feature>
<feature type="region of interest" description="G4" evidence="1">
    <location>
        <begin position="136"/>
        <end position="139"/>
    </location>
</feature>
<feature type="region of interest" description="G5" evidence="1">
    <location>
        <begin position="174"/>
        <end position="176"/>
    </location>
</feature>
<feature type="binding site" evidence="2">
    <location>
        <begin position="19"/>
        <end position="26"/>
    </location>
    <ligand>
        <name>GTP</name>
        <dbReference type="ChEBI" id="CHEBI:37565"/>
    </ligand>
</feature>
<feature type="binding site" evidence="2">
    <location>
        <position position="26"/>
    </location>
    <ligand>
        <name>Mg(2+)</name>
        <dbReference type="ChEBI" id="CHEBI:18420"/>
    </ligand>
</feature>
<feature type="binding site" evidence="2">
    <location>
        <begin position="81"/>
        <end position="85"/>
    </location>
    <ligand>
        <name>GTP</name>
        <dbReference type="ChEBI" id="CHEBI:37565"/>
    </ligand>
</feature>
<feature type="binding site" evidence="2">
    <location>
        <begin position="136"/>
        <end position="139"/>
    </location>
    <ligand>
        <name>GTP</name>
        <dbReference type="ChEBI" id="CHEBI:37565"/>
    </ligand>
</feature>